<sequence>MIKVAIVDDSAVVRQVLSSMLENQPDITLLGCARDPLFALKLFEQQWPDVIILDIEMPRMDGITFLKKVMAEKPTPVVICSTLTEQGASVTIAALAAGAVDIITKPKLGLKGFLEESQARLLQAIRAAAKASVAKLRVNGLAKPMPVIAKHNADVVLASTNHALNQTTDRVVALGTSTGGTHALEYVLTALPRTSAGIVVVQHMPEHFTAAFASRLNGVCEMEVKEAEDNDRVMPGLVLIANGGKHMLLQRSGAQYRVQLKDGPLVSRHRPSVDVLFRSVANAAGKNALGVIMTGMGDDGARGLLEMHQCGAITLAQDEASCVVYGMPKEAVKLGAVSRQVALDNIAEEIIAFTKQ</sequence>
<name>CHEB3_SHEON</name>
<comment type="function">
    <text evidence="1">Involved in chemotaxis. Part of a chemotaxis signal transduction system that modulates chemotaxis in response to various stimuli. Catalyzes the demethylation of specific methylglutamate residues introduced into the chemoreceptors (methyl-accepting chemotaxis proteins or MCP) by CheR. Also mediates the irreversible deamidation of specific glutamine residues to glutamic acid.</text>
</comment>
<comment type="catalytic activity">
    <reaction evidence="1">
        <text>[protein]-L-glutamate 5-O-methyl ester + H2O = L-glutamyl-[protein] + methanol + H(+)</text>
        <dbReference type="Rhea" id="RHEA:23236"/>
        <dbReference type="Rhea" id="RHEA-COMP:10208"/>
        <dbReference type="Rhea" id="RHEA-COMP:10311"/>
        <dbReference type="ChEBI" id="CHEBI:15377"/>
        <dbReference type="ChEBI" id="CHEBI:15378"/>
        <dbReference type="ChEBI" id="CHEBI:17790"/>
        <dbReference type="ChEBI" id="CHEBI:29973"/>
        <dbReference type="ChEBI" id="CHEBI:82795"/>
        <dbReference type="EC" id="3.1.1.61"/>
    </reaction>
</comment>
<comment type="catalytic activity">
    <reaction evidence="1">
        <text>L-glutaminyl-[protein] + H2O = L-glutamyl-[protein] + NH4(+)</text>
        <dbReference type="Rhea" id="RHEA:16441"/>
        <dbReference type="Rhea" id="RHEA-COMP:10207"/>
        <dbReference type="Rhea" id="RHEA-COMP:10208"/>
        <dbReference type="ChEBI" id="CHEBI:15377"/>
        <dbReference type="ChEBI" id="CHEBI:28938"/>
        <dbReference type="ChEBI" id="CHEBI:29973"/>
        <dbReference type="ChEBI" id="CHEBI:30011"/>
        <dbReference type="EC" id="3.5.1.44"/>
    </reaction>
</comment>
<comment type="subcellular location">
    <subcellularLocation>
        <location evidence="1">Cytoplasm</location>
    </subcellularLocation>
</comment>
<comment type="domain">
    <text evidence="1">Contains a C-terminal catalytic domain, and an N-terminal region which modulates catalytic activity.</text>
</comment>
<comment type="PTM">
    <text evidence="1">Phosphorylated by CheA. Phosphorylation of the N-terminal regulatory domain activates the methylesterase activity.</text>
</comment>
<comment type="similarity">
    <text evidence="1">Belongs to the CheB family.</text>
</comment>
<evidence type="ECO:0000255" key="1">
    <source>
        <dbReference type="HAMAP-Rule" id="MF_00099"/>
    </source>
</evidence>
<dbReference type="EC" id="3.1.1.61" evidence="1"/>
<dbReference type="EC" id="3.5.1.44" evidence="1"/>
<dbReference type="EMBL" id="AE014299">
    <property type="protein sequence ID" value="AAN55361.1"/>
    <property type="molecule type" value="Genomic_DNA"/>
</dbReference>
<dbReference type="RefSeq" id="NP_717917.1">
    <property type="nucleotide sequence ID" value="NC_004347.2"/>
</dbReference>
<dbReference type="RefSeq" id="WP_011072319.1">
    <property type="nucleotide sequence ID" value="NC_004347.2"/>
</dbReference>
<dbReference type="SMR" id="Q8EEQ0"/>
<dbReference type="STRING" id="211586.SO_2327"/>
<dbReference type="PaxDb" id="211586-SO_2327"/>
<dbReference type="KEGG" id="son:SO_2327"/>
<dbReference type="PATRIC" id="fig|211586.12.peg.2242"/>
<dbReference type="eggNOG" id="COG2201">
    <property type="taxonomic scope" value="Bacteria"/>
</dbReference>
<dbReference type="HOGENOM" id="CLU_000445_51_0_6"/>
<dbReference type="OrthoDB" id="9793421at2"/>
<dbReference type="PhylomeDB" id="Q8EEQ0"/>
<dbReference type="BioCyc" id="SONE211586:G1GMP-2126-MONOMER"/>
<dbReference type="Proteomes" id="UP000008186">
    <property type="component" value="Chromosome"/>
</dbReference>
<dbReference type="GO" id="GO:0005737">
    <property type="term" value="C:cytoplasm"/>
    <property type="evidence" value="ECO:0007669"/>
    <property type="project" value="UniProtKB-SubCell"/>
</dbReference>
<dbReference type="GO" id="GO:0000156">
    <property type="term" value="F:phosphorelay response regulator activity"/>
    <property type="evidence" value="ECO:0007669"/>
    <property type="project" value="InterPro"/>
</dbReference>
<dbReference type="GO" id="GO:0008984">
    <property type="term" value="F:protein-glutamate methylesterase activity"/>
    <property type="evidence" value="ECO:0007669"/>
    <property type="project" value="UniProtKB-UniRule"/>
</dbReference>
<dbReference type="GO" id="GO:0050568">
    <property type="term" value="F:protein-glutamine glutaminase activity"/>
    <property type="evidence" value="ECO:0007669"/>
    <property type="project" value="UniProtKB-UniRule"/>
</dbReference>
<dbReference type="GO" id="GO:0006935">
    <property type="term" value="P:chemotaxis"/>
    <property type="evidence" value="ECO:0007669"/>
    <property type="project" value="UniProtKB-UniRule"/>
</dbReference>
<dbReference type="CDD" id="cd16432">
    <property type="entry name" value="CheB_Rec"/>
    <property type="match status" value="1"/>
</dbReference>
<dbReference type="CDD" id="cd17541">
    <property type="entry name" value="REC_CheB-like"/>
    <property type="match status" value="1"/>
</dbReference>
<dbReference type="Gene3D" id="3.40.50.2300">
    <property type="match status" value="1"/>
</dbReference>
<dbReference type="Gene3D" id="3.40.50.180">
    <property type="entry name" value="Methylesterase CheB, C-terminal domain"/>
    <property type="match status" value="1"/>
</dbReference>
<dbReference type="HAMAP" id="MF_00099">
    <property type="entry name" value="CheB_chemtxs"/>
    <property type="match status" value="1"/>
</dbReference>
<dbReference type="InterPro" id="IPR008248">
    <property type="entry name" value="CheB-like"/>
</dbReference>
<dbReference type="InterPro" id="IPR035909">
    <property type="entry name" value="CheB_C"/>
</dbReference>
<dbReference type="InterPro" id="IPR011006">
    <property type="entry name" value="CheY-like_superfamily"/>
</dbReference>
<dbReference type="InterPro" id="IPR000673">
    <property type="entry name" value="Sig_transdc_resp-reg_Me-estase"/>
</dbReference>
<dbReference type="InterPro" id="IPR001789">
    <property type="entry name" value="Sig_transdc_resp-reg_receiver"/>
</dbReference>
<dbReference type="NCBIfam" id="NF001965">
    <property type="entry name" value="PRK00742.1"/>
    <property type="match status" value="1"/>
</dbReference>
<dbReference type="NCBIfam" id="NF009206">
    <property type="entry name" value="PRK12555.1"/>
    <property type="match status" value="1"/>
</dbReference>
<dbReference type="PANTHER" id="PTHR42872">
    <property type="entry name" value="PROTEIN-GLUTAMATE METHYLESTERASE/PROTEIN-GLUTAMINE GLUTAMINASE"/>
    <property type="match status" value="1"/>
</dbReference>
<dbReference type="PANTHER" id="PTHR42872:SF6">
    <property type="entry name" value="PROTEIN-GLUTAMATE METHYLESTERASE_PROTEIN-GLUTAMINE GLUTAMINASE"/>
    <property type="match status" value="1"/>
</dbReference>
<dbReference type="Pfam" id="PF01339">
    <property type="entry name" value="CheB_methylest"/>
    <property type="match status" value="1"/>
</dbReference>
<dbReference type="Pfam" id="PF00072">
    <property type="entry name" value="Response_reg"/>
    <property type="match status" value="1"/>
</dbReference>
<dbReference type="PIRSF" id="PIRSF000876">
    <property type="entry name" value="RR_chemtxs_CheB"/>
    <property type="match status" value="1"/>
</dbReference>
<dbReference type="SMART" id="SM00448">
    <property type="entry name" value="REC"/>
    <property type="match status" value="1"/>
</dbReference>
<dbReference type="SUPFAM" id="SSF52172">
    <property type="entry name" value="CheY-like"/>
    <property type="match status" value="1"/>
</dbReference>
<dbReference type="SUPFAM" id="SSF52738">
    <property type="entry name" value="Methylesterase CheB, C-terminal domain"/>
    <property type="match status" value="1"/>
</dbReference>
<dbReference type="PROSITE" id="PS50122">
    <property type="entry name" value="CHEB"/>
    <property type="match status" value="1"/>
</dbReference>
<dbReference type="PROSITE" id="PS50110">
    <property type="entry name" value="RESPONSE_REGULATORY"/>
    <property type="match status" value="1"/>
</dbReference>
<gene>
    <name evidence="1" type="primary">cheB3</name>
    <name type="ordered locus">SO_2327</name>
</gene>
<accession>Q8EEQ0</accession>
<feature type="chain" id="PRO_0000158030" description="Protein-glutamate methylesterase/protein-glutamine glutaminase 3">
    <location>
        <begin position="1"/>
        <end position="356"/>
    </location>
</feature>
<feature type="domain" description="Response regulatory" evidence="1">
    <location>
        <begin position="3"/>
        <end position="120"/>
    </location>
</feature>
<feature type="domain" description="CheB-type methylesterase" evidence="1">
    <location>
        <begin position="165"/>
        <end position="356"/>
    </location>
</feature>
<feature type="active site" evidence="1">
    <location>
        <position position="177"/>
    </location>
</feature>
<feature type="active site" evidence="1">
    <location>
        <position position="203"/>
    </location>
</feature>
<feature type="active site" evidence="1">
    <location>
        <position position="299"/>
    </location>
</feature>
<feature type="modified residue" description="4-aspartylphosphate" evidence="1">
    <location>
        <position position="54"/>
    </location>
</feature>
<proteinExistence type="inferred from homology"/>
<organism>
    <name type="scientific">Shewanella oneidensis (strain ATCC 700550 / JCM 31522 / CIP 106686 / LMG 19005 / NCIMB 14063 / MR-1)</name>
    <dbReference type="NCBI Taxonomy" id="211586"/>
    <lineage>
        <taxon>Bacteria</taxon>
        <taxon>Pseudomonadati</taxon>
        <taxon>Pseudomonadota</taxon>
        <taxon>Gammaproteobacteria</taxon>
        <taxon>Alteromonadales</taxon>
        <taxon>Shewanellaceae</taxon>
        <taxon>Shewanella</taxon>
    </lineage>
</organism>
<reference key="1">
    <citation type="journal article" date="2002" name="Nat. Biotechnol.">
        <title>Genome sequence of the dissimilatory metal ion-reducing bacterium Shewanella oneidensis.</title>
        <authorList>
            <person name="Heidelberg J.F."/>
            <person name="Paulsen I.T."/>
            <person name="Nelson K.E."/>
            <person name="Gaidos E.J."/>
            <person name="Nelson W.C."/>
            <person name="Read T.D."/>
            <person name="Eisen J.A."/>
            <person name="Seshadri R."/>
            <person name="Ward N.L."/>
            <person name="Methe B.A."/>
            <person name="Clayton R.A."/>
            <person name="Meyer T."/>
            <person name="Tsapin A."/>
            <person name="Scott J."/>
            <person name="Beanan M.J."/>
            <person name="Brinkac L.M."/>
            <person name="Daugherty S.C."/>
            <person name="DeBoy R.T."/>
            <person name="Dodson R.J."/>
            <person name="Durkin A.S."/>
            <person name="Haft D.H."/>
            <person name="Kolonay J.F."/>
            <person name="Madupu R."/>
            <person name="Peterson J.D."/>
            <person name="Umayam L.A."/>
            <person name="White O."/>
            <person name="Wolf A.M."/>
            <person name="Vamathevan J.J."/>
            <person name="Weidman J.F."/>
            <person name="Impraim M."/>
            <person name="Lee K."/>
            <person name="Berry K.J."/>
            <person name="Lee C."/>
            <person name="Mueller J."/>
            <person name="Khouri H.M."/>
            <person name="Gill J."/>
            <person name="Utterback T.R."/>
            <person name="McDonald L.A."/>
            <person name="Feldblyum T.V."/>
            <person name="Smith H.O."/>
            <person name="Venter J.C."/>
            <person name="Nealson K.H."/>
            <person name="Fraser C.M."/>
        </authorList>
    </citation>
    <scope>NUCLEOTIDE SEQUENCE [LARGE SCALE GENOMIC DNA]</scope>
    <source>
        <strain>ATCC 700550 / JCM 31522 / CIP 106686 / LMG 19005 / NCIMB 14063 / MR-1</strain>
    </source>
</reference>
<keyword id="KW-0145">Chemotaxis</keyword>
<keyword id="KW-0963">Cytoplasm</keyword>
<keyword id="KW-0378">Hydrolase</keyword>
<keyword id="KW-0597">Phosphoprotein</keyword>
<keyword id="KW-1185">Reference proteome</keyword>
<protein>
    <recommendedName>
        <fullName evidence="1">Protein-glutamate methylesterase/protein-glutamine glutaminase 3</fullName>
        <ecNumber evidence="1">3.1.1.61</ecNumber>
        <ecNumber evidence="1">3.5.1.44</ecNumber>
    </recommendedName>
</protein>